<protein>
    <recommendedName>
        <fullName>Putative fructokinase</fullName>
        <ecNumber>2.7.1.4</ecNumber>
    </recommendedName>
    <alternativeName>
        <fullName>Glucomannan utilization protein E</fullName>
    </alternativeName>
</protein>
<comment type="function">
    <text evidence="1">Seems to be involved in the degradation of glucomannan.</text>
</comment>
<comment type="catalytic activity">
    <reaction>
        <text>D-fructose + ATP = D-fructose 6-phosphate + ADP + H(+)</text>
        <dbReference type="Rhea" id="RHEA:16125"/>
        <dbReference type="ChEBI" id="CHEBI:15378"/>
        <dbReference type="ChEBI" id="CHEBI:30616"/>
        <dbReference type="ChEBI" id="CHEBI:37721"/>
        <dbReference type="ChEBI" id="CHEBI:61527"/>
        <dbReference type="ChEBI" id="CHEBI:456216"/>
        <dbReference type="EC" id="2.7.1.4"/>
    </reaction>
</comment>
<comment type="cofactor">
    <cofactor evidence="2">
        <name>Mg(2+)</name>
        <dbReference type="ChEBI" id="CHEBI:18420"/>
    </cofactor>
</comment>
<comment type="activity regulation">
    <text evidence="2">Inhibited by zinc ions.</text>
</comment>
<comment type="induction">
    <text evidence="1">Up-regulated by konjac glucomannan and by cellobiose and mannobiose, the possible degradation products of glucomannan. Repressed by glucose via the carbon catabolite repression system. Also repressed by GmuR.</text>
</comment>
<comment type="similarity">
    <text evidence="2">Belongs to the ROK (NagC/XylR) family.</text>
</comment>
<gene>
    <name type="primary">gmuE</name>
    <name type="synonym">ydhR</name>
    <name type="ordered locus">BSU05860</name>
</gene>
<accession>O05510</accession>
<sequence>MLGGIEAGGTKFVCAVGREDGTIIDRIEFPTKMPDETIEKVIQYFSQFSLQAIGIGSFGPVDNDKTSQTYGTITATPKAGWRHYPFLQTVKNEMKIPVGFSTDVNAAALGEFLFGEAKGLDSCLYITIGTGIGAGAIVEGRLLQGLSHPEMGHIYIRRHPDDVYQGKCPYHGDCFEGLASGPAIEARWGKKAADLSDIAQVWELEGYYIAQALAQYILILAPKKIILGGGVMQQKQVFSYIYQYVPKIMNSYLDFSELSDDISDYIVPPRLGSNAGIIGTLVLAHQALQAEAASGEVRS</sequence>
<name>SCRK_BACSU</name>
<proteinExistence type="evidence at protein level"/>
<organism>
    <name type="scientific">Bacillus subtilis (strain 168)</name>
    <dbReference type="NCBI Taxonomy" id="224308"/>
    <lineage>
        <taxon>Bacteria</taxon>
        <taxon>Bacillati</taxon>
        <taxon>Bacillota</taxon>
        <taxon>Bacilli</taxon>
        <taxon>Bacillales</taxon>
        <taxon>Bacillaceae</taxon>
        <taxon>Bacillus</taxon>
    </lineage>
</organism>
<keyword id="KW-0002">3D-structure</keyword>
<keyword id="KW-0067">ATP-binding</keyword>
<keyword id="KW-0119">Carbohydrate metabolism</keyword>
<keyword id="KW-0418">Kinase</keyword>
<keyword id="KW-0460">Magnesium</keyword>
<keyword id="KW-0479">Metal-binding</keyword>
<keyword id="KW-0547">Nucleotide-binding</keyword>
<keyword id="KW-0624">Polysaccharide degradation</keyword>
<keyword id="KW-1185">Reference proteome</keyword>
<keyword id="KW-0808">Transferase</keyword>
<keyword id="KW-0862">Zinc</keyword>
<reference key="1">
    <citation type="journal article" date="1997" name="Microbiology">
        <title>Nucleotide sequence and analysis of the phoB-rrnE-groESL region of the Bacillus subtilis chromosome.</title>
        <authorList>
            <person name="Sadaie Y."/>
            <person name="Yata K."/>
            <person name="Fujita M."/>
            <person name="Sagai H."/>
            <person name="Itaya M."/>
            <person name="Kasahara Y."/>
            <person name="Ogasawara N."/>
        </authorList>
    </citation>
    <scope>NUCLEOTIDE SEQUENCE [GENOMIC DNA]</scope>
    <source>
        <strain>168 / JH642</strain>
    </source>
</reference>
<reference key="2">
    <citation type="journal article" date="1997" name="Nature">
        <title>The complete genome sequence of the Gram-positive bacterium Bacillus subtilis.</title>
        <authorList>
            <person name="Kunst F."/>
            <person name="Ogasawara N."/>
            <person name="Moszer I."/>
            <person name="Albertini A.M."/>
            <person name="Alloni G."/>
            <person name="Azevedo V."/>
            <person name="Bertero M.G."/>
            <person name="Bessieres P."/>
            <person name="Bolotin A."/>
            <person name="Borchert S."/>
            <person name="Borriss R."/>
            <person name="Boursier L."/>
            <person name="Brans A."/>
            <person name="Braun M."/>
            <person name="Brignell S.C."/>
            <person name="Bron S."/>
            <person name="Brouillet S."/>
            <person name="Bruschi C.V."/>
            <person name="Caldwell B."/>
            <person name="Capuano V."/>
            <person name="Carter N.M."/>
            <person name="Choi S.-K."/>
            <person name="Codani J.-J."/>
            <person name="Connerton I.F."/>
            <person name="Cummings N.J."/>
            <person name="Daniel R.A."/>
            <person name="Denizot F."/>
            <person name="Devine K.M."/>
            <person name="Duesterhoeft A."/>
            <person name="Ehrlich S.D."/>
            <person name="Emmerson P.T."/>
            <person name="Entian K.-D."/>
            <person name="Errington J."/>
            <person name="Fabret C."/>
            <person name="Ferrari E."/>
            <person name="Foulger D."/>
            <person name="Fritz C."/>
            <person name="Fujita M."/>
            <person name="Fujita Y."/>
            <person name="Fuma S."/>
            <person name="Galizzi A."/>
            <person name="Galleron N."/>
            <person name="Ghim S.-Y."/>
            <person name="Glaser P."/>
            <person name="Goffeau A."/>
            <person name="Golightly E.J."/>
            <person name="Grandi G."/>
            <person name="Guiseppi G."/>
            <person name="Guy B.J."/>
            <person name="Haga K."/>
            <person name="Haiech J."/>
            <person name="Harwood C.R."/>
            <person name="Henaut A."/>
            <person name="Hilbert H."/>
            <person name="Holsappel S."/>
            <person name="Hosono S."/>
            <person name="Hullo M.-F."/>
            <person name="Itaya M."/>
            <person name="Jones L.-M."/>
            <person name="Joris B."/>
            <person name="Karamata D."/>
            <person name="Kasahara Y."/>
            <person name="Klaerr-Blanchard M."/>
            <person name="Klein C."/>
            <person name="Kobayashi Y."/>
            <person name="Koetter P."/>
            <person name="Koningstein G."/>
            <person name="Krogh S."/>
            <person name="Kumano M."/>
            <person name="Kurita K."/>
            <person name="Lapidus A."/>
            <person name="Lardinois S."/>
            <person name="Lauber J."/>
            <person name="Lazarevic V."/>
            <person name="Lee S.-M."/>
            <person name="Levine A."/>
            <person name="Liu H."/>
            <person name="Masuda S."/>
            <person name="Mauel C."/>
            <person name="Medigue C."/>
            <person name="Medina N."/>
            <person name="Mellado R.P."/>
            <person name="Mizuno M."/>
            <person name="Moestl D."/>
            <person name="Nakai S."/>
            <person name="Noback M."/>
            <person name="Noone D."/>
            <person name="O'Reilly M."/>
            <person name="Ogawa K."/>
            <person name="Ogiwara A."/>
            <person name="Oudega B."/>
            <person name="Park S.-H."/>
            <person name="Parro V."/>
            <person name="Pohl T.M."/>
            <person name="Portetelle D."/>
            <person name="Porwollik S."/>
            <person name="Prescott A.M."/>
            <person name="Presecan E."/>
            <person name="Pujic P."/>
            <person name="Purnelle B."/>
            <person name="Rapoport G."/>
            <person name="Rey M."/>
            <person name="Reynolds S."/>
            <person name="Rieger M."/>
            <person name="Rivolta C."/>
            <person name="Rocha E."/>
            <person name="Roche B."/>
            <person name="Rose M."/>
            <person name="Sadaie Y."/>
            <person name="Sato T."/>
            <person name="Scanlan E."/>
            <person name="Schleich S."/>
            <person name="Schroeter R."/>
            <person name="Scoffone F."/>
            <person name="Sekiguchi J."/>
            <person name="Sekowska A."/>
            <person name="Seror S.J."/>
            <person name="Serror P."/>
            <person name="Shin B.-S."/>
            <person name="Soldo B."/>
            <person name="Sorokin A."/>
            <person name="Tacconi E."/>
            <person name="Takagi T."/>
            <person name="Takahashi H."/>
            <person name="Takemaru K."/>
            <person name="Takeuchi M."/>
            <person name="Tamakoshi A."/>
            <person name="Tanaka T."/>
            <person name="Terpstra P."/>
            <person name="Tognoni A."/>
            <person name="Tosato V."/>
            <person name="Uchiyama S."/>
            <person name="Vandenbol M."/>
            <person name="Vannier F."/>
            <person name="Vassarotti A."/>
            <person name="Viari A."/>
            <person name="Wambutt R."/>
            <person name="Wedler E."/>
            <person name="Wedler H."/>
            <person name="Weitzenegger T."/>
            <person name="Winters P."/>
            <person name="Wipat A."/>
            <person name="Yamamoto H."/>
            <person name="Yamane K."/>
            <person name="Yasumoto K."/>
            <person name="Yata K."/>
            <person name="Yoshida K."/>
            <person name="Yoshikawa H.-F."/>
            <person name="Zumstein E."/>
            <person name="Yoshikawa H."/>
            <person name="Danchin A."/>
        </authorList>
    </citation>
    <scope>NUCLEOTIDE SEQUENCE [LARGE SCALE GENOMIC DNA]</scope>
    <source>
        <strain>168</strain>
    </source>
</reference>
<reference key="3">
    <citation type="journal article" date="2008" name="FEMS Microbiol. Lett.">
        <title>Glucomannan utilization operon of Bacillus subtilis.</title>
        <authorList>
            <person name="Sadaie Y."/>
            <person name="Nakadate H."/>
            <person name="Fukui R."/>
            <person name="Yee L.M."/>
            <person name="Asai K."/>
        </authorList>
    </citation>
    <scope>INDUCTION</scope>
    <scope>FUNCTION IN GLUCOMANNAN UTILIZATION</scope>
    <source>
        <strain>168</strain>
    </source>
</reference>
<reference key="4">
    <citation type="submission" date="2009-02" db="PDB data bank">
        <title>Structure of a putative fructokinase from Bacillus subtilis.</title>
        <authorList>
            <consortium name="Midwest center for structural genomics (MCSG)"/>
        </authorList>
    </citation>
    <scope>X-RAY CRYSTALLOGRAPHY (2.1 ANGSTROMS) IN COMPLEX WITH ADP AND ZINC IONS</scope>
</reference>
<feature type="chain" id="PRO_0000095681" description="Putative fructokinase">
    <location>
        <begin position="1"/>
        <end position="299"/>
    </location>
</feature>
<feature type="binding site">
    <location>
        <position position="130"/>
    </location>
    <ligand>
        <name>ATP</name>
        <dbReference type="ChEBI" id="CHEBI:30616"/>
    </ligand>
</feature>
<feature type="binding site">
    <location>
        <position position="153"/>
    </location>
    <ligand>
        <name>Zn(2+)</name>
        <dbReference type="ChEBI" id="CHEBI:29105"/>
    </ligand>
</feature>
<feature type="binding site">
    <location>
        <position position="168"/>
    </location>
    <ligand>
        <name>Zn(2+)</name>
        <dbReference type="ChEBI" id="CHEBI:29105"/>
    </ligand>
</feature>
<feature type="binding site">
    <location>
        <position position="171"/>
    </location>
    <ligand>
        <name>Zn(2+)</name>
        <dbReference type="ChEBI" id="CHEBI:29105"/>
    </ligand>
</feature>
<feature type="binding site">
    <location>
        <position position="174"/>
    </location>
    <ligand>
        <name>Zn(2+)</name>
        <dbReference type="ChEBI" id="CHEBI:29105"/>
    </ligand>
</feature>
<feature type="binding site">
    <location>
        <position position="182"/>
    </location>
    <ligand>
        <name>ATP</name>
        <dbReference type="ChEBI" id="CHEBI:30616"/>
    </ligand>
</feature>
<feature type="binding site">
    <location>
        <begin position="230"/>
        <end position="234"/>
    </location>
    <ligand>
        <name>ATP</name>
        <dbReference type="ChEBI" id="CHEBI:30616"/>
    </ligand>
</feature>
<feature type="strand" evidence="4">
    <location>
        <begin position="2"/>
        <end position="7"/>
    </location>
</feature>
<feature type="strand" evidence="4">
    <location>
        <begin position="12"/>
        <end position="17"/>
    </location>
</feature>
<feature type="strand" evidence="4">
    <location>
        <begin position="23"/>
        <end position="28"/>
    </location>
</feature>
<feature type="helix" evidence="4">
    <location>
        <begin position="34"/>
        <end position="39"/>
    </location>
</feature>
<feature type="helix" evidence="4">
    <location>
        <begin position="42"/>
        <end position="45"/>
    </location>
</feature>
<feature type="strand" evidence="4">
    <location>
        <begin position="51"/>
        <end position="57"/>
    </location>
</feature>
<feature type="strand" evidence="4">
    <location>
        <begin position="59"/>
        <end position="61"/>
    </location>
</feature>
<feature type="turn" evidence="4">
    <location>
        <begin position="68"/>
        <end position="71"/>
    </location>
</feature>
<feature type="turn" evidence="3">
    <location>
        <begin position="79"/>
        <end position="81"/>
    </location>
</feature>
<feature type="helix" evidence="4">
    <location>
        <begin position="86"/>
        <end position="90"/>
    </location>
</feature>
<feature type="strand" evidence="4">
    <location>
        <begin position="98"/>
        <end position="102"/>
    </location>
</feature>
<feature type="helix" evidence="4">
    <location>
        <begin position="103"/>
        <end position="114"/>
    </location>
</feature>
<feature type="turn" evidence="3">
    <location>
        <begin position="116"/>
        <end position="119"/>
    </location>
</feature>
<feature type="strand" evidence="4">
    <location>
        <begin position="123"/>
        <end position="138"/>
    </location>
</feature>
<feature type="strand" evidence="4">
    <location>
        <begin position="145"/>
        <end position="147"/>
    </location>
</feature>
<feature type="helix" evidence="4">
    <location>
        <begin position="151"/>
        <end position="153"/>
    </location>
</feature>
<feature type="turn" evidence="4">
    <location>
        <begin position="169"/>
        <end position="171"/>
    </location>
</feature>
<feature type="strand" evidence="4">
    <location>
        <begin position="172"/>
        <end position="174"/>
    </location>
</feature>
<feature type="helix" evidence="4">
    <location>
        <begin position="175"/>
        <end position="179"/>
    </location>
</feature>
<feature type="helix" evidence="4">
    <location>
        <begin position="181"/>
        <end position="188"/>
    </location>
</feature>
<feature type="helix" evidence="4">
    <location>
        <begin position="192"/>
        <end position="195"/>
    </location>
</feature>
<feature type="helix" evidence="4">
    <location>
        <begin position="199"/>
        <end position="219"/>
    </location>
</feature>
<feature type="strand" evidence="4">
    <location>
        <begin position="225"/>
        <end position="230"/>
    </location>
</feature>
<feature type="helix" evidence="4">
    <location>
        <begin position="231"/>
        <end position="233"/>
    </location>
</feature>
<feature type="helix" evidence="4">
    <location>
        <begin position="237"/>
        <end position="249"/>
    </location>
</feature>
<feature type="helix" evidence="4">
    <location>
        <begin position="256"/>
        <end position="258"/>
    </location>
</feature>
<feature type="turn" evidence="4">
    <location>
        <begin position="259"/>
        <end position="261"/>
    </location>
</feature>
<feature type="helix" evidence="4">
    <location>
        <begin position="262"/>
        <end position="264"/>
    </location>
</feature>
<feature type="helix" evidence="4">
    <location>
        <begin position="272"/>
        <end position="274"/>
    </location>
</feature>
<feature type="helix" evidence="4">
    <location>
        <begin position="275"/>
        <end position="292"/>
    </location>
</feature>
<dbReference type="EC" id="2.7.1.4"/>
<dbReference type="EMBL" id="D88802">
    <property type="protein sequence ID" value="BAA19710.1"/>
    <property type="molecule type" value="Genomic_DNA"/>
</dbReference>
<dbReference type="EMBL" id="AL009126">
    <property type="protein sequence ID" value="CAB12405.1"/>
    <property type="molecule type" value="Genomic_DNA"/>
</dbReference>
<dbReference type="PIR" id="F69785">
    <property type="entry name" value="F69785"/>
</dbReference>
<dbReference type="RefSeq" id="NP_388467.1">
    <property type="nucleotide sequence ID" value="NC_000964.3"/>
</dbReference>
<dbReference type="RefSeq" id="WP_003234095.1">
    <property type="nucleotide sequence ID" value="NZ_OZ025638.1"/>
</dbReference>
<dbReference type="PDB" id="1XC3">
    <property type="method" value="X-ray"/>
    <property type="resolution" value="2.10 A"/>
    <property type="chains" value="A=1-299"/>
</dbReference>
<dbReference type="PDB" id="3LM9">
    <property type="method" value="X-ray"/>
    <property type="resolution" value="2.45 A"/>
    <property type="chains" value="A=1-299"/>
</dbReference>
<dbReference type="PDB" id="3OHR">
    <property type="method" value="X-ray"/>
    <property type="resolution" value="1.66 A"/>
    <property type="chains" value="A=1-299"/>
</dbReference>
<dbReference type="PDBsum" id="1XC3"/>
<dbReference type="PDBsum" id="3LM9"/>
<dbReference type="PDBsum" id="3OHR"/>
<dbReference type="SMR" id="O05510"/>
<dbReference type="FunCoup" id="O05510">
    <property type="interactions" value="134"/>
</dbReference>
<dbReference type="STRING" id="224308.BSU05860"/>
<dbReference type="PaxDb" id="224308-BSU05860"/>
<dbReference type="DNASU" id="938016"/>
<dbReference type="EnsemblBacteria" id="CAB12405">
    <property type="protein sequence ID" value="CAB12405"/>
    <property type="gene ID" value="BSU_05860"/>
</dbReference>
<dbReference type="GeneID" id="938016"/>
<dbReference type="KEGG" id="bsu:BSU05860"/>
<dbReference type="PATRIC" id="fig|224308.179.peg.630"/>
<dbReference type="eggNOG" id="COG1940">
    <property type="taxonomic scope" value="Bacteria"/>
</dbReference>
<dbReference type="InParanoid" id="O05510"/>
<dbReference type="OrthoDB" id="9783435at2"/>
<dbReference type="PhylomeDB" id="O05510"/>
<dbReference type="BioCyc" id="BSUB:BSU05860-MONOMER"/>
<dbReference type="BRENDA" id="2.7.1.4">
    <property type="organism ID" value="658"/>
</dbReference>
<dbReference type="EvolutionaryTrace" id="O05510"/>
<dbReference type="Proteomes" id="UP000001570">
    <property type="component" value="Chromosome"/>
</dbReference>
<dbReference type="GO" id="GO:0005524">
    <property type="term" value="F:ATP binding"/>
    <property type="evidence" value="ECO:0007669"/>
    <property type="project" value="UniProtKB-KW"/>
</dbReference>
<dbReference type="GO" id="GO:0008865">
    <property type="term" value="F:fructokinase activity"/>
    <property type="evidence" value="ECO:0007669"/>
    <property type="project" value="UniProtKB-EC"/>
</dbReference>
<dbReference type="GO" id="GO:0046872">
    <property type="term" value="F:metal ion binding"/>
    <property type="evidence" value="ECO:0007669"/>
    <property type="project" value="UniProtKB-KW"/>
</dbReference>
<dbReference type="GO" id="GO:0000272">
    <property type="term" value="P:polysaccharide catabolic process"/>
    <property type="evidence" value="ECO:0007669"/>
    <property type="project" value="UniProtKB-KW"/>
</dbReference>
<dbReference type="CDD" id="cd24067">
    <property type="entry name" value="ASKHA_NBD_ROK_BsFRK-like"/>
    <property type="match status" value="1"/>
</dbReference>
<dbReference type="FunFam" id="3.30.420.40:FF:000136">
    <property type="entry name" value="Putative fructokinase"/>
    <property type="match status" value="1"/>
</dbReference>
<dbReference type="FunFam" id="3.30.420.40:FF:000153">
    <property type="entry name" value="Putative fructokinase"/>
    <property type="match status" value="1"/>
</dbReference>
<dbReference type="Gene3D" id="3.30.420.40">
    <property type="match status" value="2"/>
</dbReference>
<dbReference type="InterPro" id="IPR043129">
    <property type="entry name" value="ATPase_NBD"/>
</dbReference>
<dbReference type="InterPro" id="IPR051804">
    <property type="entry name" value="Carb_Metab_Reg_Kinase/Isom"/>
</dbReference>
<dbReference type="InterPro" id="IPR000600">
    <property type="entry name" value="ROK"/>
</dbReference>
<dbReference type="InterPro" id="IPR049874">
    <property type="entry name" value="ROK_cs"/>
</dbReference>
<dbReference type="PANTHER" id="PTHR42742:SF3">
    <property type="entry name" value="FRUCTOKINASE"/>
    <property type="match status" value="1"/>
</dbReference>
<dbReference type="PANTHER" id="PTHR42742">
    <property type="entry name" value="TRANSCRIPTIONAL REPRESSOR MPRA"/>
    <property type="match status" value="1"/>
</dbReference>
<dbReference type="Pfam" id="PF00480">
    <property type="entry name" value="ROK"/>
    <property type="match status" value="1"/>
</dbReference>
<dbReference type="SUPFAM" id="SSF53067">
    <property type="entry name" value="Actin-like ATPase domain"/>
    <property type="match status" value="1"/>
</dbReference>
<dbReference type="PROSITE" id="PS01125">
    <property type="entry name" value="ROK"/>
    <property type="match status" value="1"/>
</dbReference>
<evidence type="ECO:0000269" key="1">
    <source>
    </source>
</evidence>
<evidence type="ECO:0000305" key="2"/>
<evidence type="ECO:0007829" key="3">
    <source>
        <dbReference type="PDB" id="1XC3"/>
    </source>
</evidence>
<evidence type="ECO:0007829" key="4">
    <source>
        <dbReference type="PDB" id="3OHR"/>
    </source>
</evidence>